<accession>Q9CHI2</accession>
<proteinExistence type="inferred from homology"/>
<evidence type="ECO:0000250" key="1"/>
<evidence type="ECO:0000255" key="2">
    <source>
        <dbReference type="HAMAP-Rule" id="MF_01057"/>
    </source>
</evidence>
<keyword id="KW-0489">Methyltransferase</keyword>
<keyword id="KW-1185">Reference proteome</keyword>
<keyword id="KW-0949">S-adenosyl-L-methionine</keyword>
<keyword id="KW-0808">Transferase</keyword>
<keyword id="KW-0819">tRNA processing</keyword>
<comment type="function">
    <text evidence="2">Catalyzes the formation of N(7)-methylguanine at position 46 (m7G46) in tRNA.</text>
</comment>
<comment type="catalytic activity">
    <reaction evidence="2">
        <text>guanosine(46) in tRNA + S-adenosyl-L-methionine = N(7)-methylguanosine(46) in tRNA + S-adenosyl-L-homocysteine</text>
        <dbReference type="Rhea" id="RHEA:42708"/>
        <dbReference type="Rhea" id="RHEA-COMP:10188"/>
        <dbReference type="Rhea" id="RHEA-COMP:10189"/>
        <dbReference type="ChEBI" id="CHEBI:57856"/>
        <dbReference type="ChEBI" id="CHEBI:59789"/>
        <dbReference type="ChEBI" id="CHEBI:74269"/>
        <dbReference type="ChEBI" id="CHEBI:74480"/>
        <dbReference type="EC" id="2.1.1.33"/>
    </reaction>
</comment>
<comment type="pathway">
    <text evidence="2">tRNA modification; N(7)-methylguanine-tRNA biosynthesis.</text>
</comment>
<comment type="similarity">
    <text evidence="2">Belongs to the class I-like SAM-binding methyltransferase superfamily. TrmB family.</text>
</comment>
<gene>
    <name evidence="2" type="primary">trmB</name>
    <name type="ordered locus">LL0749</name>
    <name type="ORF">L156302</name>
</gene>
<organism>
    <name type="scientific">Lactococcus lactis subsp. lactis (strain IL1403)</name>
    <name type="common">Streptococcus lactis</name>
    <dbReference type="NCBI Taxonomy" id="272623"/>
    <lineage>
        <taxon>Bacteria</taxon>
        <taxon>Bacillati</taxon>
        <taxon>Bacillota</taxon>
        <taxon>Bacilli</taxon>
        <taxon>Lactobacillales</taxon>
        <taxon>Streptococcaceae</taxon>
        <taxon>Lactococcus</taxon>
    </lineage>
</organism>
<feature type="chain" id="PRO_0000171338" description="tRNA (guanine-N(7)-)-methyltransferase">
    <location>
        <begin position="1"/>
        <end position="217"/>
    </location>
</feature>
<feature type="region of interest" description="Interaction with RNA" evidence="2">
    <location>
        <begin position="124"/>
        <end position="129"/>
    </location>
</feature>
<feature type="active site" evidence="1">
    <location>
        <position position="118"/>
    </location>
</feature>
<feature type="binding site" evidence="2">
    <location>
        <position position="44"/>
    </location>
    <ligand>
        <name>S-adenosyl-L-methionine</name>
        <dbReference type="ChEBI" id="CHEBI:59789"/>
    </ligand>
</feature>
<feature type="binding site" evidence="2">
    <location>
        <position position="69"/>
    </location>
    <ligand>
        <name>S-adenosyl-L-methionine</name>
        <dbReference type="ChEBI" id="CHEBI:59789"/>
    </ligand>
</feature>
<feature type="binding site" evidence="2">
    <location>
        <position position="96"/>
    </location>
    <ligand>
        <name>S-adenosyl-L-methionine</name>
        <dbReference type="ChEBI" id="CHEBI:59789"/>
    </ligand>
</feature>
<feature type="binding site" evidence="2">
    <location>
        <position position="118"/>
    </location>
    <ligand>
        <name>S-adenosyl-L-methionine</name>
        <dbReference type="ChEBI" id="CHEBI:59789"/>
    </ligand>
</feature>
<feature type="binding site" evidence="2">
    <location>
        <position position="122"/>
    </location>
    <ligand>
        <name>substrate</name>
    </ligand>
</feature>
<feature type="binding site" evidence="2">
    <location>
        <position position="154"/>
    </location>
    <ligand>
        <name>substrate</name>
    </ligand>
</feature>
<feature type="binding site" evidence="2">
    <location>
        <begin position="193"/>
        <end position="196"/>
    </location>
    <ligand>
        <name>substrate</name>
    </ligand>
</feature>
<reference key="1">
    <citation type="journal article" date="2001" name="Genome Res.">
        <title>The complete genome sequence of the lactic acid bacterium Lactococcus lactis ssp. lactis IL1403.</title>
        <authorList>
            <person name="Bolotin A."/>
            <person name="Wincker P."/>
            <person name="Mauger S."/>
            <person name="Jaillon O."/>
            <person name="Malarme K."/>
            <person name="Weissenbach J."/>
            <person name="Ehrlich S.D."/>
            <person name="Sorokin A."/>
        </authorList>
    </citation>
    <scope>NUCLEOTIDE SEQUENCE [LARGE SCALE GENOMIC DNA]</scope>
    <source>
        <strain>IL1403</strain>
    </source>
</reference>
<dbReference type="EC" id="2.1.1.33" evidence="2"/>
<dbReference type="EMBL" id="AE005176">
    <property type="protein sequence ID" value="AAK04847.1"/>
    <property type="molecule type" value="Genomic_DNA"/>
</dbReference>
<dbReference type="PIR" id="E86718">
    <property type="entry name" value="E86718"/>
</dbReference>
<dbReference type="RefSeq" id="NP_266905.1">
    <property type="nucleotide sequence ID" value="NC_002662.1"/>
</dbReference>
<dbReference type="RefSeq" id="WP_003132468.1">
    <property type="nucleotide sequence ID" value="NC_002662.1"/>
</dbReference>
<dbReference type="SMR" id="Q9CHI2"/>
<dbReference type="PaxDb" id="272623-L156302"/>
<dbReference type="EnsemblBacteria" id="AAK04847">
    <property type="protein sequence ID" value="AAK04847"/>
    <property type="gene ID" value="L156302"/>
</dbReference>
<dbReference type="GeneID" id="89632882"/>
<dbReference type="KEGG" id="lla:L156302"/>
<dbReference type="PATRIC" id="fig|272623.7.peg.803"/>
<dbReference type="eggNOG" id="COG0220">
    <property type="taxonomic scope" value="Bacteria"/>
</dbReference>
<dbReference type="HOGENOM" id="CLU_050910_2_1_9"/>
<dbReference type="OrthoDB" id="9802090at2"/>
<dbReference type="UniPathway" id="UPA00989"/>
<dbReference type="Proteomes" id="UP000002196">
    <property type="component" value="Chromosome"/>
</dbReference>
<dbReference type="GO" id="GO:0043527">
    <property type="term" value="C:tRNA methyltransferase complex"/>
    <property type="evidence" value="ECO:0007669"/>
    <property type="project" value="TreeGrafter"/>
</dbReference>
<dbReference type="GO" id="GO:0008176">
    <property type="term" value="F:tRNA (guanine(46)-N7)-methyltransferase activity"/>
    <property type="evidence" value="ECO:0007669"/>
    <property type="project" value="UniProtKB-UniRule"/>
</dbReference>
<dbReference type="CDD" id="cd02440">
    <property type="entry name" value="AdoMet_MTases"/>
    <property type="match status" value="1"/>
</dbReference>
<dbReference type="FunFam" id="3.40.50.150:FF:000035">
    <property type="entry name" value="tRNA (guanine-N(7)-)-methyltransferase"/>
    <property type="match status" value="1"/>
</dbReference>
<dbReference type="Gene3D" id="3.40.50.150">
    <property type="entry name" value="Vaccinia Virus protein VP39"/>
    <property type="match status" value="1"/>
</dbReference>
<dbReference type="HAMAP" id="MF_01057">
    <property type="entry name" value="tRNA_methyltr_TrmB"/>
    <property type="match status" value="1"/>
</dbReference>
<dbReference type="InterPro" id="IPR029063">
    <property type="entry name" value="SAM-dependent_MTases_sf"/>
</dbReference>
<dbReference type="InterPro" id="IPR003358">
    <property type="entry name" value="tRNA_(Gua-N-7)_MeTrfase_Trmb"/>
</dbReference>
<dbReference type="InterPro" id="IPR055361">
    <property type="entry name" value="tRNA_methyltr_TrmB_bact"/>
</dbReference>
<dbReference type="NCBIfam" id="NF001080">
    <property type="entry name" value="PRK00121.2-2"/>
    <property type="match status" value="1"/>
</dbReference>
<dbReference type="NCBIfam" id="TIGR00091">
    <property type="entry name" value="tRNA (guanosine(46)-N7)-methyltransferase TrmB"/>
    <property type="match status" value="1"/>
</dbReference>
<dbReference type="PANTHER" id="PTHR23417">
    <property type="entry name" value="3-DEOXY-D-MANNO-OCTULOSONIC-ACID TRANSFERASE/TRNA GUANINE-N 7 - -METHYLTRANSFERASE"/>
    <property type="match status" value="1"/>
</dbReference>
<dbReference type="PANTHER" id="PTHR23417:SF14">
    <property type="entry name" value="PENTACOTRIPEPTIDE-REPEAT REGION OF PRORP DOMAIN-CONTAINING PROTEIN"/>
    <property type="match status" value="1"/>
</dbReference>
<dbReference type="Pfam" id="PF02390">
    <property type="entry name" value="Methyltransf_4"/>
    <property type="match status" value="1"/>
</dbReference>
<dbReference type="SUPFAM" id="SSF53335">
    <property type="entry name" value="S-adenosyl-L-methionine-dependent methyltransferases"/>
    <property type="match status" value="1"/>
</dbReference>
<dbReference type="PROSITE" id="PS51625">
    <property type="entry name" value="SAM_MT_TRMB"/>
    <property type="match status" value="1"/>
</dbReference>
<name>TRMB_LACLA</name>
<sequence length="217" mass="24947">MRVRNRKGAGEMLAENAHIVVENPADFKGRWSERFGNDHPIHIEVGCGKGAFITGMAALHPEINYIAIDMQLSVLSYALDKAIEADLPNVQMMLVDGAALSEYFADGEIDQVYLNFSDPWPKGRHEKRRLTYKSFLATYEKILRPEGEIHFKTDNRGLFEYSLVSLANYGMELKKVWLDLHQDEEFAPQNVMTEYEQKFSQKGQVIYRLEAKFLPKK</sequence>
<protein>
    <recommendedName>
        <fullName evidence="2">tRNA (guanine-N(7)-)-methyltransferase</fullName>
        <ecNumber evidence="2">2.1.1.33</ecNumber>
    </recommendedName>
    <alternativeName>
        <fullName evidence="2">tRNA (guanine(46)-N(7))-methyltransferase</fullName>
    </alternativeName>
    <alternativeName>
        <fullName evidence="2">tRNA(m7G46)-methyltransferase</fullName>
    </alternativeName>
</protein>